<sequence length="285" mass="29983">MVKELRERTGLGMMECKKALVEADGDIEKAIDDMRKSGQAKAAKKAGRTAAEGGVVVATNDANTVAVMVEINSETDFVARDDNFLGFCDKVAAAALSAGETDVAKIGELKLEDGSTVEEARQALVQKIGENIQIRRAAKLEAEGAIGAYVHGGRIGVLIALKGGDAELGKDVAMHVAAVNPMVVSGDQVPADVLEKEKEIIRAQPDMEGKPAEIVEKMLGGRINKFLKEVSLLDQPFVKDPNTTVGALVKAAGAEVASFERLVVGEGIEKEEVDFAAEVEAAAKG</sequence>
<organism>
    <name type="scientific">Alcanivorax borkumensis (strain ATCC 700651 / DSM 11573 / NCIMB 13689 / SK2)</name>
    <dbReference type="NCBI Taxonomy" id="393595"/>
    <lineage>
        <taxon>Bacteria</taxon>
        <taxon>Pseudomonadati</taxon>
        <taxon>Pseudomonadota</taxon>
        <taxon>Gammaproteobacteria</taxon>
        <taxon>Oceanospirillales</taxon>
        <taxon>Alcanivoracaceae</taxon>
        <taxon>Alcanivorax</taxon>
    </lineage>
</organism>
<accession>Q0VQF6</accession>
<protein>
    <recommendedName>
        <fullName evidence="1">Elongation factor Ts</fullName>
        <shortName evidence="1">EF-Ts</shortName>
    </recommendedName>
</protein>
<comment type="function">
    <text evidence="1">Associates with the EF-Tu.GDP complex and induces the exchange of GDP to GTP. It remains bound to the aminoacyl-tRNA.EF-Tu.GTP complex up to the GTP hydrolysis stage on the ribosome.</text>
</comment>
<comment type="subcellular location">
    <subcellularLocation>
        <location evidence="1">Cytoplasm</location>
    </subcellularLocation>
</comment>
<comment type="similarity">
    <text evidence="1">Belongs to the EF-Ts family.</text>
</comment>
<comment type="sequence caution" evidence="2">
    <conflict type="erroneous initiation">
        <sequence resource="EMBL-CDS" id="CAL16592"/>
    </conflict>
</comment>
<reference key="1">
    <citation type="journal article" date="2006" name="Nat. Biotechnol.">
        <title>Genome sequence of the ubiquitous hydrocarbon-degrading marine bacterium Alcanivorax borkumensis.</title>
        <authorList>
            <person name="Schneiker S."/>
            <person name="Martins dos Santos V.A.P."/>
            <person name="Bartels D."/>
            <person name="Bekel T."/>
            <person name="Brecht M."/>
            <person name="Buhrmester J."/>
            <person name="Chernikova T.N."/>
            <person name="Denaro R."/>
            <person name="Ferrer M."/>
            <person name="Gertler C."/>
            <person name="Goesmann A."/>
            <person name="Golyshina O.V."/>
            <person name="Kaminski F."/>
            <person name="Khachane A.N."/>
            <person name="Lang S."/>
            <person name="Linke B."/>
            <person name="McHardy A.C."/>
            <person name="Meyer F."/>
            <person name="Nechitaylo T."/>
            <person name="Puehler A."/>
            <person name="Regenhardt D."/>
            <person name="Rupp O."/>
            <person name="Sabirova J.S."/>
            <person name="Selbitschka W."/>
            <person name="Yakimov M.M."/>
            <person name="Timmis K.N."/>
            <person name="Vorhoelter F.-J."/>
            <person name="Weidner S."/>
            <person name="Kaiser O."/>
            <person name="Golyshin P.N."/>
        </authorList>
    </citation>
    <scope>NUCLEOTIDE SEQUENCE [LARGE SCALE GENOMIC DNA]</scope>
    <source>
        <strain>ATCC 700651 / DSM 11573 / NCIMB 13689 / SK2</strain>
    </source>
</reference>
<dbReference type="EMBL" id="AM286690">
    <property type="protein sequence ID" value="CAL16592.1"/>
    <property type="status" value="ALT_INIT"/>
    <property type="molecule type" value="Genomic_DNA"/>
</dbReference>
<dbReference type="SMR" id="Q0VQF6"/>
<dbReference type="STRING" id="393595.ABO_1144"/>
<dbReference type="KEGG" id="abo:ABO_1144"/>
<dbReference type="eggNOG" id="COG0264">
    <property type="taxonomic scope" value="Bacteria"/>
</dbReference>
<dbReference type="HOGENOM" id="CLU_047155_0_0_6"/>
<dbReference type="Proteomes" id="UP000008871">
    <property type="component" value="Chromosome"/>
</dbReference>
<dbReference type="GO" id="GO:0005737">
    <property type="term" value="C:cytoplasm"/>
    <property type="evidence" value="ECO:0007669"/>
    <property type="project" value="UniProtKB-SubCell"/>
</dbReference>
<dbReference type="GO" id="GO:0003746">
    <property type="term" value="F:translation elongation factor activity"/>
    <property type="evidence" value="ECO:0007669"/>
    <property type="project" value="UniProtKB-UniRule"/>
</dbReference>
<dbReference type="CDD" id="cd14275">
    <property type="entry name" value="UBA_EF-Ts"/>
    <property type="match status" value="1"/>
</dbReference>
<dbReference type="FunFam" id="1.10.286.20:FF:000001">
    <property type="entry name" value="Elongation factor Ts"/>
    <property type="match status" value="1"/>
</dbReference>
<dbReference type="FunFam" id="1.10.8.10:FF:000001">
    <property type="entry name" value="Elongation factor Ts"/>
    <property type="match status" value="1"/>
</dbReference>
<dbReference type="Gene3D" id="1.10.286.20">
    <property type="match status" value="1"/>
</dbReference>
<dbReference type="Gene3D" id="1.10.8.10">
    <property type="entry name" value="DNA helicase RuvA subunit, C-terminal domain"/>
    <property type="match status" value="1"/>
</dbReference>
<dbReference type="Gene3D" id="3.30.479.20">
    <property type="entry name" value="Elongation factor Ts, dimerisation domain"/>
    <property type="match status" value="2"/>
</dbReference>
<dbReference type="HAMAP" id="MF_00050">
    <property type="entry name" value="EF_Ts"/>
    <property type="match status" value="1"/>
</dbReference>
<dbReference type="InterPro" id="IPR036402">
    <property type="entry name" value="EF-Ts_dimer_sf"/>
</dbReference>
<dbReference type="InterPro" id="IPR001816">
    <property type="entry name" value="Transl_elong_EFTs/EF1B"/>
</dbReference>
<dbReference type="InterPro" id="IPR014039">
    <property type="entry name" value="Transl_elong_EFTs/EF1B_dimer"/>
</dbReference>
<dbReference type="InterPro" id="IPR018101">
    <property type="entry name" value="Transl_elong_Ts_CS"/>
</dbReference>
<dbReference type="InterPro" id="IPR009060">
    <property type="entry name" value="UBA-like_sf"/>
</dbReference>
<dbReference type="NCBIfam" id="TIGR00116">
    <property type="entry name" value="tsf"/>
    <property type="match status" value="1"/>
</dbReference>
<dbReference type="PANTHER" id="PTHR11741">
    <property type="entry name" value="ELONGATION FACTOR TS"/>
    <property type="match status" value="1"/>
</dbReference>
<dbReference type="PANTHER" id="PTHR11741:SF0">
    <property type="entry name" value="ELONGATION FACTOR TS, MITOCHONDRIAL"/>
    <property type="match status" value="1"/>
</dbReference>
<dbReference type="Pfam" id="PF00889">
    <property type="entry name" value="EF_TS"/>
    <property type="match status" value="1"/>
</dbReference>
<dbReference type="SUPFAM" id="SSF54713">
    <property type="entry name" value="Elongation factor Ts (EF-Ts), dimerisation domain"/>
    <property type="match status" value="2"/>
</dbReference>
<dbReference type="SUPFAM" id="SSF46934">
    <property type="entry name" value="UBA-like"/>
    <property type="match status" value="1"/>
</dbReference>
<dbReference type="PROSITE" id="PS01126">
    <property type="entry name" value="EF_TS_1"/>
    <property type="match status" value="1"/>
</dbReference>
<dbReference type="PROSITE" id="PS01127">
    <property type="entry name" value="EF_TS_2"/>
    <property type="match status" value="1"/>
</dbReference>
<evidence type="ECO:0000255" key="1">
    <source>
        <dbReference type="HAMAP-Rule" id="MF_00050"/>
    </source>
</evidence>
<evidence type="ECO:0000305" key="2"/>
<name>EFTS_ALCBS</name>
<proteinExistence type="inferred from homology"/>
<keyword id="KW-0963">Cytoplasm</keyword>
<keyword id="KW-0251">Elongation factor</keyword>
<keyword id="KW-0648">Protein biosynthesis</keyword>
<keyword id="KW-1185">Reference proteome</keyword>
<feature type="chain" id="PRO_0000323441" description="Elongation factor Ts">
    <location>
        <begin position="1"/>
        <end position="285"/>
    </location>
</feature>
<feature type="region of interest" description="Involved in Mg(2+) ion dislocation from EF-Tu" evidence="1">
    <location>
        <begin position="75"/>
        <end position="78"/>
    </location>
</feature>
<gene>
    <name evidence="1" type="primary">tsf</name>
    <name type="ordered locus">ABO_1144</name>
</gene>